<feature type="chain" id="PRO_0000400184" description="1D-myo-inositol 2-acetamido-2-deoxy-alpha-D-glucopyranoside deacetylase 2">
    <location>
        <begin position="1"/>
        <end position="293"/>
    </location>
</feature>
<feature type="binding site" evidence="1">
    <location>
        <position position="6"/>
    </location>
    <ligand>
        <name>Zn(2+)</name>
        <dbReference type="ChEBI" id="CHEBI:29105"/>
    </ligand>
</feature>
<feature type="binding site" evidence="1">
    <location>
        <position position="9"/>
    </location>
    <ligand>
        <name>Zn(2+)</name>
        <dbReference type="ChEBI" id="CHEBI:29105"/>
    </ligand>
</feature>
<feature type="binding site" evidence="1">
    <location>
        <position position="142"/>
    </location>
    <ligand>
        <name>Zn(2+)</name>
        <dbReference type="ChEBI" id="CHEBI:29105"/>
    </ligand>
</feature>
<dbReference type="EC" id="3.5.1.103" evidence="1"/>
<dbReference type="EMBL" id="CT573213">
    <property type="protein sequence ID" value="CAJ64755.1"/>
    <property type="molecule type" value="Genomic_DNA"/>
</dbReference>
<dbReference type="RefSeq" id="WP_011607182.1">
    <property type="nucleotide sequence ID" value="NC_008278.1"/>
</dbReference>
<dbReference type="SMR" id="Q0RCR9"/>
<dbReference type="STRING" id="326424.FRAAL6132"/>
<dbReference type="KEGG" id="fal:FRAAL6132"/>
<dbReference type="eggNOG" id="COG2120">
    <property type="taxonomic scope" value="Bacteria"/>
</dbReference>
<dbReference type="HOGENOM" id="CLU_049311_2_1_11"/>
<dbReference type="OrthoDB" id="158614at2"/>
<dbReference type="Proteomes" id="UP000000657">
    <property type="component" value="Chromosome"/>
</dbReference>
<dbReference type="GO" id="GO:0035595">
    <property type="term" value="F:N-acetylglucosaminylinositol deacetylase activity"/>
    <property type="evidence" value="ECO:0007669"/>
    <property type="project" value="UniProtKB-EC"/>
</dbReference>
<dbReference type="GO" id="GO:0008270">
    <property type="term" value="F:zinc ion binding"/>
    <property type="evidence" value="ECO:0007669"/>
    <property type="project" value="UniProtKB-UniRule"/>
</dbReference>
<dbReference type="GO" id="GO:0010125">
    <property type="term" value="P:mycothiol biosynthetic process"/>
    <property type="evidence" value="ECO:0007669"/>
    <property type="project" value="UniProtKB-UniRule"/>
</dbReference>
<dbReference type="Gene3D" id="3.40.50.10320">
    <property type="entry name" value="LmbE-like"/>
    <property type="match status" value="1"/>
</dbReference>
<dbReference type="HAMAP" id="MF_01696">
    <property type="entry name" value="MshB"/>
    <property type="match status" value="1"/>
</dbReference>
<dbReference type="InterPro" id="IPR003737">
    <property type="entry name" value="GlcNAc_PI_deacetylase-related"/>
</dbReference>
<dbReference type="InterPro" id="IPR024078">
    <property type="entry name" value="LmbE-like_dom_sf"/>
</dbReference>
<dbReference type="InterPro" id="IPR017810">
    <property type="entry name" value="Mycothiol_biosynthesis_MshB"/>
</dbReference>
<dbReference type="NCBIfam" id="TIGR03445">
    <property type="entry name" value="mycothiol_MshB"/>
    <property type="match status" value="1"/>
</dbReference>
<dbReference type="PANTHER" id="PTHR12993:SF26">
    <property type="entry name" value="1D-MYO-INOSITOL 2-ACETAMIDO-2-DEOXY-ALPHA-D-GLUCOPYRANOSIDE DEACETYLASE"/>
    <property type="match status" value="1"/>
</dbReference>
<dbReference type="PANTHER" id="PTHR12993">
    <property type="entry name" value="N-ACETYLGLUCOSAMINYL-PHOSPHATIDYLINOSITOL DE-N-ACETYLASE-RELATED"/>
    <property type="match status" value="1"/>
</dbReference>
<dbReference type="Pfam" id="PF02585">
    <property type="entry name" value="PIG-L"/>
    <property type="match status" value="1"/>
</dbReference>
<dbReference type="SUPFAM" id="SSF102588">
    <property type="entry name" value="LmbE-like"/>
    <property type="match status" value="1"/>
</dbReference>
<keyword id="KW-0378">Hydrolase</keyword>
<keyword id="KW-0479">Metal-binding</keyword>
<keyword id="KW-1185">Reference proteome</keyword>
<keyword id="KW-0862">Zinc</keyword>
<proteinExistence type="inferred from homology"/>
<protein>
    <recommendedName>
        <fullName evidence="1">1D-myo-inositol 2-acetamido-2-deoxy-alpha-D-glucopyranoside deacetylase 2</fullName>
        <shortName evidence="1">GlcNAc-Ins deacetylase 2</shortName>
        <ecNumber evidence="1">3.5.1.103</ecNumber>
    </recommendedName>
    <alternativeName>
        <fullName>N-acetyl-1-D-myo-inositol 2-amino-2-deoxy-alpha-D-glucopyranoside deacetylase 2</fullName>
    </alternativeName>
</protein>
<accession>Q0RCR9</accession>
<gene>
    <name evidence="1" type="primary">mshB2</name>
    <name type="ordered locus">FRAAL6132</name>
</gene>
<sequence length="293" mass="31307">MFVHAHPDDEVISTGIALASYAAAPDTSVTLVTCTLGEEGEVLVPELINLRADRGDQLGGYRIGELAGSCAALGITDQRFLGGPGRWRDSGMIGTPANDHPRSLWRADLAEATAELVRIVRDVRPHVLVSYDSNGGYGHPDHIRAHQVTARAFTDAADPAFAPGTGEPWQVAKRYETAMPRSRAVAGFELFHDSADRNNPFAGLKSVDDLAMTLVDDADITAEISAPEFFDAKIAAMRAHRTQMAVDGFFFALADGIGQRAWGVEHFVLAAGTRGPGDGPDGRERDLLAGVAF</sequence>
<organism>
    <name type="scientific">Frankia alni (strain DSM 45986 / CECT 9034 / ACN14a)</name>
    <dbReference type="NCBI Taxonomy" id="326424"/>
    <lineage>
        <taxon>Bacteria</taxon>
        <taxon>Bacillati</taxon>
        <taxon>Actinomycetota</taxon>
        <taxon>Actinomycetes</taxon>
        <taxon>Frankiales</taxon>
        <taxon>Frankiaceae</taxon>
        <taxon>Frankia</taxon>
    </lineage>
</organism>
<comment type="function">
    <text evidence="1">Catalyzes the deacetylation of 1D-myo-inositol 2-acetamido-2-deoxy-alpha-D-glucopyranoside (GlcNAc-Ins) in the mycothiol biosynthesis pathway.</text>
</comment>
<comment type="catalytic activity">
    <reaction evidence="1">
        <text>1D-myo-inositol 2-acetamido-2-deoxy-alpha-D-glucopyranoside + H2O = 1D-myo-inositol 2-amino-2-deoxy-alpha-D-glucopyranoside + acetate</text>
        <dbReference type="Rhea" id="RHEA:26180"/>
        <dbReference type="ChEBI" id="CHEBI:15377"/>
        <dbReference type="ChEBI" id="CHEBI:30089"/>
        <dbReference type="ChEBI" id="CHEBI:52442"/>
        <dbReference type="ChEBI" id="CHEBI:58886"/>
        <dbReference type="EC" id="3.5.1.103"/>
    </reaction>
</comment>
<comment type="cofactor">
    <cofactor evidence="1">
        <name>Zn(2+)</name>
        <dbReference type="ChEBI" id="CHEBI:29105"/>
    </cofactor>
    <text evidence="1">Binds 1 zinc ion per subunit.</text>
</comment>
<comment type="similarity">
    <text evidence="1">Belongs to the MshB deacetylase family.</text>
</comment>
<name>MSHB2_FRAAA</name>
<evidence type="ECO:0000255" key="1">
    <source>
        <dbReference type="HAMAP-Rule" id="MF_01696"/>
    </source>
</evidence>
<reference key="1">
    <citation type="journal article" date="2007" name="Genome Res.">
        <title>Genome characteristics of facultatively symbiotic Frankia sp. strains reflect host range and host plant biogeography.</title>
        <authorList>
            <person name="Normand P."/>
            <person name="Lapierre P."/>
            <person name="Tisa L.S."/>
            <person name="Gogarten J.P."/>
            <person name="Alloisio N."/>
            <person name="Bagnarol E."/>
            <person name="Bassi C.A."/>
            <person name="Berry A.M."/>
            <person name="Bickhart D.M."/>
            <person name="Choisne N."/>
            <person name="Couloux A."/>
            <person name="Cournoyer B."/>
            <person name="Cruveiller S."/>
            <person name="Daubin V."/>
            <person name="Demange N."/>
            <person name="Francino M.P."/>
            <person name="Goltsman E."/>
            <person name="Huang Y."/>
            <person name="Kopp O.R."/>
            <person name="Labarre L."/>
            <person name="Lapidus A."/>
            <person name="Lavire C."/>
            <person name="Marechal J."/>
            <person name="Martinez M."/>
            <person name="Mastronunzio J.E."/>
            <person name="Mullin B.C."/>
            <person name="Niemann J."/>
            <person name="Pujic P."/>
            <person name="Rawnsley T."/>
            <person name="Rouy Z."/>
            <person name="Schenowitz C."/>
            <person name="Sellstedt A."/>
            <person name="Tavares F."/>
            <person name="Tomkins J.P."/>
            <person name="Vallenet D."/>
            <person name="Valverde C."/>
            <person name="Wall L.G."/>
            <person name="Wang Y."/>
            <person name="Medigue C."/>
            <person name="Benson D.R."/>
        </authorList>
    </citation>
    <scope>NUCLEOTIDE SEQUENCE [LARGE SCALE GENOMIC DNA]</scope>
    <source>
        <strain>DSM 45986 / CECT 9034 / ACN14a</strain>
    </source>
</reference>